<comment type="catalytic activity">
    <reaction evidence="1">
        <text>urea + 2 H2O + H(+) = hydrogencarbonate + 2 NH4(+)</text>
        <dbReference type="Rhea" id="RHEA:20557"/>
        <dbReference type="ChEBI" id="CHEBI:15377"/>
        <dbReference type="ChEBI" id="CHEBI:15378"/>
        <dbReference type="ChEBI" id="CHEBI:16199"/>
        <dbReference type="ChEBI" id="CHEBI:17544"/>
        <dbReference type="ChEBI" id="CHEBI:28938"/>
        <dbReference type="EC" id="3.5.1.5"/>
    </reaction>
</comment>
<comment type="pathway">
    <text evidence="1">Nitrogen metabolism; urea degradation; CO(2) and NH(3) from urea (urease route): step 1/1.</text>
</comment>
<comment type="subunit">
    <text evidence="1">Heterotrimer of UreA (gamma), UreB (beta) and UreC (alpha) subunits. Three heterotrimers associate to form the active enzyme.</text>
</comment>
<comment type="subcellular location">
    <subcellularLocation>
        <location evidence="1">Cytoplasm</location>
    </subcellularLocation>
</comment>
<comment type="similarity">
    <text evidence="1">Belongs to the urease beta subunit family.</text>
</comment>
<protein>
    <recommendedName>
        <fullName evidence="1">Urease subunit beta</fullName>
        <ecNumber evidence="1">3.5.1.5</ecNumber>
    </recommendedName>
    <alternativeName>
        <fullName evidence="1">Urea amidohydrolase subunit beta</fullName>
    </alternativeName>
</protein>
<gene>
    <name evidence="1" type="primary">ureB</name>
    <name type="ordered locus">Rsph17025_0986</name>
</gene>
<accession>A4WR73</accession>
<name>URE2_CERS5</name>
<proteinExistence type="inferred from homology"/>
<keyword id="KW-0963">Cytoplasm</keyword>
<keyword id="KW-0378">Hydrolase</keyword>
<feature type="chain" id="PRO_1000070770" description="Urease subunit beta">
    <location>
        <begin position="1"/>
        <end position="101"/>
    </location>
</feature>
<reference key="1">
    <citation type="submission" date="2007-04" db="EMBL/GenBank/DDBJ databases">
        <title>Complete sequence of chromosome of Rhodobacter sphaeroides ATCC 17025.</title>
        <authorList>
            <consortium name="US DOE Joint Genome Institute"/>
            <person name="Copeland A."/>
            <person name="Lucas S."/>
            <person name="Lapidus A."/>
            <person name="Barry K."/>
            <person name="Detter J.C."/>
            <person name="Glavina del Rio T."/>
            <person name="Hammon N."/>
            <person name="Israni S."/>
            <person name="Dalin E."/>
            <person name="Tice H."/>
            <person name="Pitluck S."/>
            <person name="Chertkov O."/>
            <person name="Brettin T."/>
            <person name="Bruce D."/>
            <person name="Han C."/>
            <person name="Schmutz J."/>
            <person name="Larimer F."/>
            <person name="Land M."/>
            <person name="Hauser L."/>
            <person name="Kyrpides N."/>
            <person name="Kim E."/>
            <person name="Richardson P."/>
            <person name="Mackenzie C."/>
            <person name="Choudhary M."/>
            <person name="Donohue T.J."/>
            <person name="Kaplan S."/>
        </authorList>
    </citation>
    <scope>NUCLEOTIDE SEQUENCE [LARGE SCALE GENOMIC DNA]</scope>
    <source>
        <strain>ATCC 17025 / ATH 2.4.3</strain>
    </source>
</reference>
<organism>
    <name type="scientific">Cereibacter sphaeroides (strain ATCC 17025 / ATH 2.4.3)</name>
    <name type="common">Rhodobacter sphaeroides</name>
    <dbReference type="NCBI Taxonomy" id="349102"/>
    <lineage>
        <taxon>Bacteria</taxon>
        <taxon>Pseudomonadati</taxon>
        <taxon>Pseudomonadota</taxon>
        <taxon>Alphaproteobacteria</taxon>
        <taxon>Rhodobacterales</taxon>
        <taxon>Paracoccaceae</taxon>
        <taxon>Cereibacter</taxon>
    </lineage>
</organism>
<evidence type="ECO:0000255" key="1">
    <source>
        <dbReference type="HAMAP-Rule" id="MF_01954"/>
    </source>
</evidence>
<dbReference type="EC" id="3.5.1.5" evidence="1"/>
<dbReference type="EMBL" id="CP000661">
    <property type="protein sequence ID" value="ABP69887.1"/>
    <property type="molecule type" value="Genomic_DNA"/>
</dbReference>
<dbReference type="SMR" id="A4WR73"/>
<dbReference type="STRING" id="349102.Rsph17025_0986"/>
<dbReference type="KEGG" id="rsq:Rsph17025_0986"/>
<dbReference type="eggNOG" id="COG0832">
    <property type="taxonomic scope" value="Bacteria"/>
</dbReference>
<dbReference type="HOGENOM" id="CLU_129707_1_1_5"/>
<dbReference type="BioCyc" id="RSPH349102:G1G8M-1012-MONOMER"/>
<dbReference type="UniPathway" id="UPA00258">
    <property type="reaction ID" value="UER00370"/>
</dbReference>
<dbReference type="GO" id="GO:0035550">
    <property type="term" value="C:urease complex"/>
    <property type="evidence" value="ECO:0007669"/>
    <property type="project" value="InterPro"/>
</dbReference>
<dbReference type="GO" id="GO:0009039">
    <property type="term" value="F:urease activity"/>
    <property type="evidence" value="ECO:0007669"/>
    <property type="project" value="UniProtKB-UniRule"/>
</dbReference>
<dbReference type="GO" id="GO:0043419">
    <property type="term" value="P:urea catabolic process"/>
    <property type="evidence" value="ECO:0007669"/>
    <property type="project" value="UniProtKB-UniRule"/>
</dbReference>
<dbReference type="CDD" id="cd00407">
    <property type="entry name" value="Urease_beta"/>
    <property type="match status" value="1"/>
</dbReference>
<dbReference type="FunFam" id="2.10.150.10:FF:000001">
    <property type="entry name" value="Urease subunit beta"/>
    <property type="match status" value="1"/>
</dbReference>
<dbReference type="Gene3D" id="2.10.150.10">
    <property type="entry name" value="Urease, beta subunit"/>
    <property type="match status" value="1"/>
</dbReference>
<dbReference type="HAMAP" id="MF_01954">
    <property type="entry name" value="Urease_beta"/>
    <property type="match status" value="1"/>
</dbReference>
<dbReference type="InterPro" id="IPR002019">
    <property type="entry name" value="Urease_beta-like"/>
</dbReference>
<dbReference type="InterPro" id="IPR036461">
    <property type="entry name" value="Urease_betasu_sf"/>
</dbReference>
<dbReference type="InterPro" id="IPR050069">
    <property type="entry name" value="Urease_subunit"/>
</dbReference>
<dbReference type="NCBIfam" id="NF009682">
    <property type="entry name" value="PRK13203.1"/>
    <property type="match status" value="1"/>
</dbReference>
<dbReference type="NCBIfam" id="TIGR00192">
    <property type="entry name" value="urease_beta"/>
    <property type="match status" value="1"/>
</dbReference>
<dbReference type="PANTHER" id="PTHR33569">
    <property type="entry name" value="UREASE"/>
    <property type="match status" value="1"/>
</dbReference>
<dbReference type="PANTHER" id="PTHR33569:SF1">
    <property type="entry name" value="UREASE"/>
    <property type="match status" value="1"/>
</dbReference>
<dbReference type="Pfam" id="PF00699">
    <property type="entry name" value="Urease_beta"/>
    <property type="match status" value="1"/>
</dbReference>
<dbReference type="SUPFAM" id="SSF51278">
    <property type="entry name" value="Urease, beta-subunit"/>
    <property type="match status" value="1"/>
</dbReference>
<sequence>MIPGEIFPAEGEILLNAERMQVTLVVSNAGDRPVQVGSHYHFAETNPALDFDREAARGMRLDIPAGTAVRFEPGQTREVRLVSYAGAREVYGFNGRIMGKL</sequence>